<evidence type="ECO:0000255" key="1">
    <source>
        <dbReference type="HAMAP-Rule" id="MF_00063"/>
    </source>
</evidence>
<proteinExistence type="inferred from homology"/>
<dbReference type="EC" id="1.8.4.10" evidence="1"/>
<dbReference type="EMBL" id="CP001283">
    <property type="protein sequence ID" value="ACK89191.1"/>
    <property type="molecule type" value="Genomic_DNA"/>
</dbReference>
<dbReference type="RefSeq" id="WP_000958997.1">
    <property type="nucleotide sequence ID" value="NC_011773.1"/>
</dbReference>
<dbReference type="SMR" id="B7JG06"/>
<dbReference type="KEGG" id="bcu:BCAH820_1512"/>
<dbReference type="HOGENOM" id="CLU_044089_2_1_9"/>
<dbReference type="Proteomes" id="UP000001363">
    <property type="component" value="Chromosome"/>
</dbReference>
<dbReference type="GO" id="GO:0005737">
    <property type="term" value="C:cytoplasm"/>
    <property type="evidence" value="ECO:0007669"/>
    <property type="project" value="UniProtKB-SubCell"/>
</dbReference>
<dbReference type="GO" id="GO:0051539">
    <property type="term" value="F:4 iron, 4 sulfur cluster binding"/>
    <property type="evidence" value="ECO:0007669"/>
    <property type="project" value="UniProtKB-UniRule"/>
</dbReference>
<dbReference type="GO" id="GO:0043866">
    <property type="term" value="F:adenylyl-sulfate reductase (thioredoxin) activity"/>
    <property type="evidence" value="ECO:0007669"/>
    <property type="project" value="UniProtKB-EC"/>
</dbReference>
<dbReference type="GO" id="GO:0046872">
    <property type="term" value="F:metal ion binding"/>
    <property type="evidence" value="ECO:0007669"/>
    <property type="project" value="UniProtKB-KW"/>
</dbReference>
<dbReference type="GO" id="GO:0004604">
    <property type="term" value="F:phosphoadenylyl-sulfate reductase (thioredoxin) activity"/>
    <property type="evidence" value="ECO:0007669"/>
    <property type="project" value="UniProtKB-UniRule"/>
</dbReference>
<dbReference type="GO" id="GO:0019344">
    <property type="term" value="P:cysteine biosynthetic process"/>
    <property type="evidence" value="ECO:0007669"/>
    <property type="project" value="InterPro"/>
</dbReference>
<dbReference type="GO" id="GO:0070814">
    <property type="term" value="P:hydrogen sulfide biosynthetic process"/>
    <property type="evidence" value="ECO:0007669"/>
    <property type="project" value="UniProtKB-UniRule"/>
</dbReference>
<dbReference type="GO" id="GO:0019379">
    <property type="term" value="P:sulfate assimilation, phosphoadenylyl sulfate reduction by phosphoadenylyl-sulfate reductase (thioredoxin)"/>
    <property type="evidence" value="ECO:0007669"/>
    <property type="project" value="UniProtKB-UniRule"/>
</dbReference>
<dbReference type="CDD" id="cd23945">
    <property type="entry name" value="PAPS_reductase"/>
    <property type="match status" value="1"/>
</dbReference>
<dbReference type="FunFam" id="3.40.50.620:FF:000095">
    <property type="entry name" value="Phosphoadenosine phosphosulfate reductase"/>
    <property type="match status" value="1"/>
</dbReference>
<dbReference type="Gene3D" id="3.40.50.620">
    <property type="entry name" value="HUPs"/>
    <property type="match status" value="1"/>
</dbReference>
<dbReference type="HAMAP" id="MF_00063">
    <property type="entry name" value="CysH"/>
    <property type="match status" value="1"/>
</dbReference>
<dbReference type="InterPro" id="IPR011798">
    <property type="entry name" value="APS_reductase"/>
</dbReference>
<dbReference type="InterPro" id="IPR004511">
    <property type="entry name" value="PAPS/APS_Rdtase"/>
</dbReference>
<dbReference type="InterPro" id="IPR002500">
    <property type="entry name" value="PAPS_reduct_dom"/>
</dbReference>
<dbReference type="InterPro" id="IPR014729">
    <property type="entry name" value="Rossmann-like_a/b/a_fold"/>
</dbReference>
<dbReference type="NCBIfam" id="TIGR02055">
    <property type="entry name" value="APS_reductase"/>
    <property type="match status" value="1"/>
</dbReference>
<dbReference type="NCBIfam" id="TIGR00434">
    <property type="entry name" value="cysH"/>
    <property type="match status" value="1"/>
</dbReference>
<dbReference type="NCBIfam" id="NF002537">
    <property type="entry name" value="PRK02090.1"/>
    <property type="match status" value="1"/>
</dbReference>
<dbReference type="PANTHER" id="PTHR46509">
    <property type="entry name" value="PHOSPHOADENOSINE PHOSPHOSULFATE REDUCTASE"/>
    <property type="match status" value="1"/>
</dbReference>
<dbReference type="PANTHER" id="PTHR46509:SF1">
    <property type="entry name" value="PHOSPHOADENOSINE PHOSPHOSULFATE REDUCTASE"/>
    <property type="match status" value="1"/>
</dbReference>
<dbReference type="Pfam" id="PF01507">
    <property type="entry name" value="PAPS_reduct"/>
    <property type="match status" value="1"/>
</dbReference>
<dbReference type="PIRSF" id="PIRSF000857">
    <property type="entry name" value="PAPS_reductase"/>
    <property type="match status" value="1"/>
</dbReference>
<dbReference type="SUPFAM" id="SSF52402">
    <property type="entry name" value="Adenine nucleotide alpha hydrolases-like"/>
    <property type="match status" value="1"/>
</dbReference>
<feature type="chain" id="PRO_1000116944" description="Adenosine 5'-phosphosulfate reductase">
    <location>
        <begin position="1"/>
        <end position="234"/>
    </location>
</feature>
<feature type="active site" description="Nucleophile; cysteine thiosulfonate intermediate" evidence="1">
    <location>
        <position position="229"/>
    </location>
</feature>
<feature type="binding site" evidence="1">
    <location>
        <position position="120"/>
    </location>
    <ligand>
        <name>[4Fe-4S] cluster</name>
        <dbReference type="ChEBI" id="CHEBI:49883"/>
    </ligand>
</feature>
<feature type="binding site" evidence="1">
    <location>
        <position position="121"/>
    </location>
    <ligand>
        <name>[4Fe-4S] cluster</name>
        <dbReference type="ChEBI" id="CHEBI:49883"/>
    </ligand>
</feature>
<feature type="binding site" evidence="1">
    <location>
        <position position="203"/>
    </location>
    <ligand>
        <name>[4Fe-4S] cluster</name>
        <dbReference type="ChEBI" id="CHEBI:49883"/>
    </ligand>
</feature>
<feature type="binding site" evidence="1">
    <location>
        <position position="206"/>
    </location>
    <ligand>
        <name>[4Fe-4S] cluster</name>
        <dbReference type="ChEBI" id="CHEBI:49883"/>
    </ligand>
</feature>
<comment type="function">
    <text evidence="1">Catalyzes the formation of sulfite from adenosine 5'-phosphosulfate (APS) using thioredoxin as an electron donor.</text>
</comment>
<comment type="catalytic activity">
    <reaction evidence="1">
        <text>[thioredoxin]-disulfide + sulfite + AMP + 2 H(+) = adenosine 5'-phosphosulfate + [thioredoxin]-dithiol</text>
        <dbReference type="Rhea" id="RHEA:21976"/>
        <dbReference type="Rhea" id="RHEA-COMP:10698"/>
        <dbReference type="Rhea" id="RHEA-COMP:10700"/>
        <dbReference type="ChEBI" id="CHEBI:15378"/>
        <dbReference type="ChEBI" id="CHEBI:17359"/>
        <dbReference type="ChEBI" id="CHEBI:29950"/>
        <dbReference type="ChEBI" id="CHEBI:50058"/>
        <dbReference type="ChEBI" id="CHEBI:58243"/>
        <dbReference type="ChEBI" id="CHEBI:456215"/>
        <dbReference type="EC" id="1.8.4.10"/>
    </reaction>
</comment>
<comment type="cofactor">
    <cofactor evidence="1">
        <name>[4Fe-4S] cluster</name>
        <dbReference type="ChEBI" id="CHEBI:49883"/>
    </cofactor>
    <text evidence="1">Binds 1 [4Fe-4S] cluster per subunit.</text>
</comment>
<comment type="pathway">
    <text evidence="1">Sulfur metabolism; hydrogen sulfide biosynthesis; sulfite from sulfate.</text>
</comment>
<comment type="subcellular location">
    <subcellularLocation>
        <location evidence="1">Cytoplasm</location>
    </subcellularLocation>
</comment>
<comment type="similarity">
    <text evidence="1">Belongs to the PAPS reductase family. CysH subfamily.</text>
</comment>
<sequence length="234" mass="27333">MLTYETWEENDVSFSKEDETKGALSVLSWAYKEYKSEIVYACSFGVEGMVLLHLINQVNPSAKVVFLDTNVHFQETYELIQKVRERFPSLNIIEKQPKLTLDEQDKLHGDKLWESNPNLCCKIRKILPLEESLANEKAWISGLRREQSETRKHTKFINQDHRFQSIKVCPLIHWTWKEVWRYVYKHSLPYNPLHDIGYPSIGCEKCTLPVGEGGDSRDGRWAGKVKTECGLHYQ</sequence>
<name>CYSH_BACC0</name>
<organism>
    <name type="scientific">Bacillus cereus (strain AH820)</name>
    <dbReference type="NCBI Taxonomy" id="405535"/>
    <lineage>
        <taxon>Bacteria</taxon>
        <taxon>Bacillati</taxon>
        <taxon>Bacillota</taxon>
        <taxon>Bacilli</taxon>
        <taxon>Bacillales</taxon>
        <taxon>Bacillaceae</taxon>
        <taxon>Bacillus</taxon>
        <taxon>Bacillus cereus group</taxon>
    </lineage>
</organism>
<gene>
    <name evidence="1" type="primary">cysH</name>
    <name type="ordered locus">BCAH820_1512</name>
</gene>
<accession>B7JG06</accession>
<reference key="1">
    <citation type="submission" date="2008-10" db="EMBL/GenBank/DDBJ databases">
        <title>Genome sequence of Bacillus cereus AH820.</title>
        <authorList>
            <person name="Dodson R.J."/>
            <person name="Durkin A.S."/>
            <person name="Rosovitz M.J."/>
            <person name="Rasko D.A."/>
            <person name="Hoffmaster A."/>
            <person name="Ravel J."/>
            <person name="Sutton G."/>
        </authorList>
    </citation>
    <scope>NUCLEOTIDE SEQUENCE [LARGE SCALE GENOMIC DNA]</scope>
    <source>
        <strain>AH820</strain>
    </source>
</reference>
<protein>
    <recommendedName>
        <fullName evidence="1">Adenosine 5'-phosphosulfate reductase</fullName>
        <shortName evidence="1">APS reductase</shortName>
        <ecNumber evidence="1">1.8.4.10</ecNumber>
    </recommendedName>
    <alternativeName>
        <fullName evidence="1">5'-adenylylsulfate reductase</fullName>
    </alternativeName>
    <alternativeName>
        <fullName evidence="1">Thioredoxin-dependent 5'-adenylylsulfate reductase</fullName>
    </alternativeName>
</protein>
<keyword id="KW-0963">Cytoplasm</keyword>
<keyword id="KW-0408">Iron</keyword>
<keyword id="KW-0411">Iron-sulfur</keyword>
<keyword id="KW-0479">Metal-binding</keyword>
<keyword id="KW-0560">Oxidoreductase</keyword>